<sequence>MAAGSGEQELRAIIRDLGCGPYFLGTFDKRFPGFMAPHKVACAIVNTAGRETGGEHWLAFAWNPRSNTCYLFDPFGFSDQRLKQIYQFEYEGLLRRSALATKDRCVTWKSHQTCRVRVGRCGFSAACSTACAWPTPMDKNPTMNLLTGVPNGMLQSPQVEPTLRRNQEALYRFLNSHSAYFRSHRARIEKATAFDRMNQDM</sequence>
<reference key="1">
    <citation type="journal article" date="1987" name="Gene">
        <title>Sequence of the protease of human subgroup E adenovirus type 4.</title>
        <authorList>
            <person name="Houde A."/>
            <person name="Weber J.M."/>
        </authorList>
    </citation>
    <scope>NUCLEOTIDE SEQUENCE [GENOMIC DNA]</scope>
</reference>
<dbReference type="EC" id="3.4.22.39" evidence="1"/>
<dbReference type="EMBL" id="M16692">
    <property type="protein sequence ID" value="AAA42466.1"/>
    <property type="molecule type" value="Genomic_DNA"/>
</dbReference>
<dbReference type="PIR" id="A27473">
    <property type="entry name" value="W2AD04"/>
</dbReference>
<dbReference type="SMR" id="P07885"/>
<dbReference type="MEROPS" id="C05.001"/>
<dbReference type="GO" id="GO:0042025">
    <property type="term" value="C:host cell nucleus"/>
    <property type="evidence" value="ECO:0007669"/>
    <property type="project" value="UniProtKB-SubCell"/>
</dbReference>
<dbReference type="GO" id="GO:0044423">
    <property type="term" value="C:virion component"/>
    <property type="evidence" value="ECO:0007669"/>
    <property type="project" value="UniProtKB-UniRule"/>
</dbReference>
<dbReference type="GO" id="GO:0004197">
    <property type="term" value="F:cysteine-type endopeptidase activity"/>
    <property type="evidence" value="ECO:0007669"/>
    <property type="project" value="UniProtKB-UniRule"/>
</dbReference>
<dbReference type="GO" id="GO:0003677">
    <property type="term" value="F:DNA binding"/>
    <property type="evidence" value="ECO:0007669"/>
    <property type="project" value="UniProtKB-UniRule"/>
</dbReference>
<dbReference type="GO" id="GO:0006508">
    <property type="term" value="P:proteolysis"/>
    <property type="evidence" value="ECO:0007669"/>
    <property type="project" value="UniProtKB-KW"/>
</dbReference>
<dbReference type="Gene3D" id="3.40.395.10">
    <property type="entry name" value="Adenoviral Proteinase, Chain A"/>
    <property type="match status" value="1"/>
</dbReference>
<dbReference type="HAMAP" id="MF_04059">
    <property type="entry name" value="ADV_PRO"/>
    <property type="match status" value="1"/>
</dbReference>
<dbReference type="InterPro" id="IPR038765">
    <property type="entry name" value="Papain-like_cys_pep_sf"/>
</dbReference>
<dbReference type="InterPro" id="IPR000855">
    <property type="entry name" value="Peptidase_C5"/>
</dbReference>
<dbReference type="Pfam" id="PF00770">
    <property type="entry name" value="Peptidase_C5"/>
    <property type="match status" value="1"/>
</dbReference>
<dbReference type="PIRSF" id="PIRSF001218">
    <property type="entry name" value="Protease_ADV"/>
    <property type="match status" value="1"/>
</dbReference>
<dbReference type="PRINTS" id="PR00703">
    <property type="entry name" value="ADVENDOPTASE"/>
</dbReference>
<dbReference type="SUPFAM" id="SSF54001">
    <property type="entry name" value="Cysteine proteinases"/>
    <property type="match status" value="1"/>
</dbReference>
<organismHost>
    <name type="scientific">Homo sapiens</name>
    <name type="common">Human</name>
    <dbReference type="NCBI Taxonomy" id="9606"/>
</organismHost>
<organism>
    <name type="scientific">Human adenovirus E serotype 4</name>
    <name type="common">HAdV-4</name>
    <name type="synonym">Human adenovirus 4</name>
    <dbReference type="NCBI Taxonomy" id="28280"/>
    <lineage>
        <taxon>Viruses</taxon>
        <taxon>Varidnaviria</taxon>
        <taxon>Bamfordvirae</taxon>
        <taxon>Preplasmiviricota</taxon>
        <taxon>Tectiliviricetes</taxon>
        <taxon>Rowavirales</taxon>
        <taxon>Adenoviridae</taxon>
        <taxon>Mastadenovirus</taxon>
        <taxon>Human mastadenovirus E</taxon>
    </lineage>
</organism>
<name>PRO_ADE04</name>
<accession>P07885</accession>
<gene>
    <name evidence="1" type="primary">L3</name>
</gene>
<proteinExistence type="inferred from homology"/>
<comment type="function">
    <text evidence="1">Cleaves viral precursor proteins (pTP, pIIIa, pVI, pVII, pVIII, and pX) inside newly assembled particles giving rise to mature virions. Protease complexed to its cofactor slides along the viral DNA to specifically locate and cleave the viral precursors. Mature virions have a weakened organization compared to the unmature virions, thereby facilitating subsequent uncoating. Without maturation, the particle lacks infectivity and is unable to uncoat. Late in adenovirus infection, in the cytoplasm, may participate in the cytoskeleton destruction. Cleaves host cell cytoskeletal keratins K7 and K18.</text>
</comment>
<comment type="catalytic activity">
    <reaction evidence="1">
        <text>Cleaves proteins of the adenovirus and its host cell at two consensus sites: -Yaa-Xaa-Gly-Gly-|-Xaa- and -Yaa-Xaa-Gly-Xaa-|-Gly- (in which Yaa is Met, Ile or Leu, and Xaa is any amino acid).</text>
        <dbReference type="EC" id="3.4.22.39"/>
    </reaction>
</comment>
<comment type="activity regulation">
    <text evidence="1">Requires DNA and protease cofactor for maximal activation. Inside nascent virions, becomes partially activated by binding to the viral DNA, allowing it to cleave the cofactor that binds to the protease and fully activates it. Actin, like the viral protease cofactor, seems to act as a cofactor in the cleavage of cytokeratin 18 and of actin itself.</text>
</comment>
<comment type="subunit">
    <text evidence="1">Interacts with protease cofactor pVI-C; this interaction is necessary for protease activation.</text>
</comment>
<comment type="subcellular location">
    <subcellularLocation>
        <location evidence="1">Virion</location>
    </subcellularLocation>
    <subcellularLocation>
        <location evidence="1">Host nucleus</location>
    </subcellularLocation>
    <text evidence="1">Present in about 10 copies per virion.</text>
</comment>
<comment type="induction">
    <text evidence="1">Expressed in the late phase of the viral replicative cycle.</text>
</comment>
<comment type="miscellaneous">
    <text evidence="1">All late proteins expressed from the major late promoter are produced by alternative splicing and alternative polyadenylation of the same gene giving rise to non-overlapping ORFs. A leader sequence is present in the N-terminus of all these mRNAs and is recognized by the viral shutoff protein to provide expression although conventional translation via ribosome scanning from the cap has been shut off in the host cell.</text>
</comment>
<comment type="similarity">
    <text evidence="1">Belongs to the peptidase C5 family.</text>
</comment>
<feature type="chain" id="PRO_0000218025" description="Protease">
    <location>
        <begin position="1"/>
        <end position="201"/>
    </location>
</feature>
<feature type="active site" evidence="1">
    <location>
        <position position="56"/>
    </location>
</feature>
<feature type="active site" evidence="1">
    <location>
        <position position="73"/>
    </location>
</feature>
<feature type="active site" evidence="1">
    <location>
        <position position="121"/>
    </location>
</feature>
<feature type="site" description="Cleavage; by autolysis" evidence="1">
    <location>
        <begin position="53"/>
        <end position="54"/>
    </location>
</feature>
<feature type="disulfide bond" description="Interchain (with C-10 in cleaved protease cofactor pVI-C)" evidence="1">
    <location>
        <position position="105"/>
    </location>
</feature>
<evidence type="ECO:0000255" key="1">
    <source>
        <dbReference type="HAMAP-Rule" id="MF_04059"/>
    </source>
</evidence>
<keyword id="KW-0068">Autocatalytic cleavage</keyword>
<keyword id="KW-1015">Disulfide bond</keyword>
<keyword id="KW-0238">DNA-binding</keyword>
<keyword id="KW-1048">Host nucleus</keyword>
<keyword id="KW-0378">Hydrolase</keyword>
<keyword id="KW-0426">Late protein</keyword>
<keyword id="KW-0645">Protease</keyword>
<keyword id="KW-0788">Thiol protease</keyword>
<keyword id="KW-0946">Virion</keyword>
<protein>
    <recommendedName>
        <fullName evidence="1">Protease</fullName>
        <ecNumber evidence="1">3.4.22.39</ecNumber>
    </recommendedName>
    <alternativeName>
        <fullName evidence="1">Adenain</fullName>
    </alternativeName>
    <alternativeName>
        <fullName evidence="1">Adenovirus protease</fullName>
        <shortName evidence="1">AVP</shortName>
    </alternativeName>
    <alternativeName>
        <fullName evidence="1">Adenovirus proteinase</fullName>
    </alternativeName>
    <alternativeName>
        <fullName evidence="1">Endoprotease</fullName>
    </alternativeName>
</protein>